<name>YAJC_RICTY</name>
<comment type="function">
    <text evidence="1">The SecYEG-SecDF-YajC-YidC holo-translocon (HTL) protein secretase/insertase is a supercomplex required for protein secretion, insertion of proteins into membranes, and assembly of membrane protein complexes. While the SecYEG complex is essential for assembly of a number of proteins and complexes, the SecDF-YajC-YidC subcomplex facilitates these functions.</text>
</comment>
<comment type="subunit">
    <text evidence="1">Part of the SecDF-YidC-YajC translocase complex. The SecDF-YidC-YajC translocase forms a supercomplex with SecYEG, called the holo-translocon (HTL).</text>
</comment>
<comment type="subcellular location">
    <subcellularLocation>
        <location evidence="1">Cell inner membrane</location>
        <topology evidence="1">Single-pass membrane protein</topology>
    </subcellularLocation>
</comment>
<comment type="similarity">
    <text evidence="4">Belongs to the YajC family.</text>
</comment>
<organism>
    <name type="scientific">Rickettsia typhi (strain ATCC VR-144 / Wilmington)</name>
    <dbReference type="NCBI Taxonomy" id="257363"/>
    <lineage>
        <taxon>Bacteria</taxon>
        <taxon>Pseudomonadati</taxon>
        <taxon>Pseudomonadota</taxon>
        <taxon>Alphaproteobacteria</taxon>
        <taxon>Rickettsiales</taxon>
        <taxon>Rickettsiaceae</taxon>
        <taxon>Rickettsieae</taxon>
        <taxon>Rickettsia</taxon>
        <taxon>typhus group</taxon>
    </lineage>
</organism>
<keyword id="KW-0997">Cell inner membrane</keyword>
<keyword id="KW-1003">Cell membrane</keyword>
<keyword id="KW-0472">Membrane</keyword>
<keyword id="KW-0653">Protein transport</keyword>
<keyword id="KW-0811">Translocation</keyword>
<keyword id="KW-0812">Transmembrane</keyword>
<keyword id="KW-1133">Transmembrane helix</keyword>
<keyword id="KW-0813">Transport</keyword>
<dbReference type="EMBL" id="AE017197">
    <property type="protein sequence ID" value="AAU04039.1"/>
    <property type="molecule type" value="Genomic_DNA"/>
</dbReference>
<dbReference type="RefSeq" id="WP_011191020.1">
    <property type="nucleotide sequence ID" value="NC_006142.1"/>
</dbReference>
<dbReference type="SMR" id="Q68WF3"/>
<dbReference type="KEGG" id="rty:RT0574"/>
<dbReference type="eggNOG" id="COG1862">
    <property type="taxonomic scope" value="Bacteria"/>
</dbReference>
<dbReference type="HOGENOM" id="CLU_116157_0_0_5"/>
<dbReference type="OrthoDB" id="9811406at2"/>
<dbReference type="Proteomes" id="UP000000604">
    <property type="component" value="Chromosome"/>
</dbReference>
<dbReference type="GO" id="GO:0005886">
    <property type="term" value="C:plasma membrane"/>
    <property type="evidence" value="ECO:0007669"/>
    <property type="project" value="UniProtKB-SubCell"/>
</dbReference>
<dbReference type="GO" id="GO:0015031">
    <property type="term" value="P:protein transport"/>
    <property type="evidence" value="ECO:0007669"/>
    <property type="project" value="UniProtKB-KW"/>
</dbReference>
<dbReference type="InterPro" id="IPR003849">
    <property type="entry name" value="Preprotein_translocase_YajC"/>
</dbReference>
<dbReference type="NCBIfam" id="TIGR00739">
    <property type="entry name" value="yajC"/>
    <property type="match status" value="1"/>
</dbReference>
<dbReference type="PANTHER" id="PTHR33909">
    <property type="entry name" value="SEC TRANSLOCON ACCESSORY COMPLEX SUBUNIT YAJC"/>
    <property type="match status" value="1"/>
</dbReference>
<dbReference type="PANTHER" id="PTHR33909:SF1">
    <property type="entry name" value="SEC TRANSLOCON ACCESSORY COMPLEX SUBUNIT YAJC"/>
    <property type="match status" value="1"/>
</dbReference>
<dbReference type="Pfam" id="PF02699">
    <property type="entry name" value="YajC"/>
    <property type="match status" value="1"/>
</dbReference>
<dbReference type="PRINTS" id="PR01853">
    <property type="entry name" value="YAJCTRNLCASE"/>
</dbReference>
<dbReference type="SMART" id="SM01323">
    <property type="entry name" value="YajC"/>
    <property type="match status" value="1"/>
</dbReference>
<gene>
    <name type="primary">yajC</name>
    <name type="ordered locus">RT0574</name>
</gene>
<protein>
    <recommendedName>
        <fullName>Sec translocon accessory complex subunit YajC</fullName>
    </recommendedName>
</protein>
<accession>Q68WF3</accession>
<feature type="chain" id="PRO_0000282380" description="Sec translocon accessory complex subunit YajC">
    <location>
        <begin position="1"/>
        <end position="142"/>
    </location>
</feature>
<feature type="transmembrane region" description="Helical" evidence="2">
    <location>
        <begin position="33"/>
        <end position="53"/>
    </location>
</feature>
<feature type="region of interest" description="Disordered" evidence="3">
    <location>
        <begin position="1"/>
        <end position="21"/>
    </location>
</feature>
<proteinExistence type="inferred from homology"/>
<sequence length="142" mass="16173">MSQHTQDNQINNNETIEIQETDTVPIETNSLQSGLTSLIPMILIFAVFYFLLLRPQEQRRKEREKLVREVKKGEEVLTNSGIYGIVTKVSENDNNIEIEIAKDVRIKAIKSSIIDITSRKKEVAATQENNKKNKKVICAKSS</sequence>
<reference key="1">
    <citation type="journal article" date="2004" name="J. Bacteriol.">
        <title>Complete genome sequence of Rickettsia typhi and comparison with sequences of other Rickettsiae.</title>
        <authorList>
            <person name="McLeod M.P."/>
            <person name="Qin X."/>
            <person name="Karpathy S.E."/>
            <person name="Gioia J."/>
            <person name="Highlander S.K."/>
            <person name="Fox G.E."/>
            <person name="McNeill T.Z."/>
            <person name="Jiang H."/>
            <person name="Muzny D."/>
            <person name="Jacob L.S."/>
            <person name="Hawes A.C."/>
            <person name="Sodergren E."/>
            <person name="Gill R."/>
            <person name="Hume J."/>
            <person name="Morgan M."/>
            <person name="Fan G."/>
            <person name="Amin A.G."/>
            <person name="Gibbs R.A."/>
            <person name="Hong C."/>
            <person name="Yu X.-J."/>
            <person name="Walker D.H."/>
            <person name="Weinstock G.M."/>
        </authorList>
    </citation>
    <scope>NUCLEOTIDE SEQUENCE [LARGE SCALE GENOMIC DNA]</scope>
    <source>
        <strain>ATCC VR-144 / Wilmington</strain>
    </source>
</reference>
<evidence type="ECO:0000250" key="1">
    <source>
        <dbReference type="UniProtKB" id="P0ADZ7"/>
    </source>
</evidence>
<evidence type="ECO:0000255" key="2"/>
<evidence type="ECO:0000256" key="3">
    <source>
        <dbReference type="SAM" id="MobiDB-lite"/>
    </source>
</evidence>
<evidence type="ECO:0000305" key="4"/>